<evidence type="ECO:0000250" key="1"/>
<evidence type="ECO:0000250" key="2">
    <source>
        <dbReference type="UniProtKB" id="O75874"/>
    </source>
</evidence>
<evidence type="ECO:0000250" key="3">
    <source>
        <dbReference type="UniProtKB" id="O88844"/>
    </source>
</evidence>
<evidence type="ECO:0000250" key="4">
    <source>
        <dbReference type="UniProtKB" id="P41562"/>
    </source>
</evidence>
<evidence type="ECO:0000250" key="5">
    <source>
        <dbReference type="UniProtKB" id="Q9XSG3"/>
    </source>
</evidence>
<evidence type="ECO:0000305" key="6"/>
<protein>
    <recommendedName>
        <fullName>Isocitrate dehydrogenase [NADP] cytoplasmic</fullName>
        <shortName>IDH</shortName>
        <shortName>IDH1</shortName>
        <ecNumber evidence="3">1.1.1.42</ecNumber>
    </recommendedName>
    <alternativeName>
        <fullName>Cytosolic NADP-isocitrate dehydrogenase</fullName>
    </alternativeName>
    <alternativeName>
        <fullName>IDPc</fullName>
    </alternativeName>
    <alternativeName>
        <fullName>NADP(+)-specific ICDH</fullName>
    </alternativeName>
    <alternativeName>
        <fullName>Oxalosuccinate decarboxylase</fullName>
    </alternativeName>
</protein>
<organism>
    <name type="scientific">Microtus mexicanus</name>
    <name type="common">Mexican vole</name>
    <dbReference type="NCBI Taxonomy" id="79689"/>
    <lineage>
        <taxon>Eukaryota</taxon>
        <taxon>Metazoa</taxon>
        <taxon>Chordata</taxon>
        <taxon>Craniata</taxon>
        <taxon>Vertebrata</taxon>
        <taxon>Euteleostomi</taxon>
        <taxon>Mammalia</taxon>
        <taxon>Eutheria</taxon>
        <taxon>Euarchontoglires</taxon>
        <taxon>Glires</taxon>
        <taxon>Rodentia</taxon>
        <taxon>Myomorpha</taxon>
        <taxon>Muroidea</taxon>
        <taxon>Cricetidae</taxon>
        <taxon>Arvicolinae</taxon>
        <taxon>Microtus</taxon>
    </lineage>
</organism>
<accession>Q9Z2K9</accession>
<gene>
    <name type="primary">IDH1</name>
    <name type="synonym">IDP2</name>
</gene>
<keyword id="KW-0007">Acetylation</keyword>
<keyword id="KW-0963">Cytoplasm</keyword>
<keyword id="KW-0329">Glyoxylate bypass</keyword>
<keyword id="KW-0460">Magnesium</keyword>
<keyword id="KW-0464">Manganese</keyword>
<keyword id="KW-0479">Metal-binding</keyword>
<keyword id="KW-0521">NADP</keyword>
<keyword id="KW-0560">Oxidoreductase</keyword>
<keyword id="KW-0597">Phosphoprotein</keyword>
<keyword id="KW-0816">Tricarboxylic acid cycle</keyword>
<feature type="initiator methionine" description="Removed" evidence="2">
    <location>
        <position position="1"/>
    </location>
</feature>
<feature type="chain" id="PRO_0000083576" description="Isocitrate dehydrogenase [NADP] cytoplasmic">
    <location>
        <begin position="2"/>
        <end position="414"/>
    </location>
</feature>
<feature type="binding site" evidence="2">
    <location>
        <begin position="75"/>
        <end position="77"/>
    </location>
    <ligand>
        <name>NADP(+)</name>
        <dbReference type="ChEBI" id="CHEBI:58349"/>
    </ligand>
</feature>
<feature type="binding site" description="in other chain" evidence="2">
    <location>
        <position position="77"/>
    </location>
    <ligand>
        <name>substrate</name>
        <note>ligand shared between two neighboring subunits</note>
    </ligand>
</feature>
<feature type="binding site" evidence="2">
    <location>
        <position position="82"/>
    </location>
    <ligand>
        <name>NADP(+)</name>
        <dbReference type="ChEBI" id="CHEBI:58349"/>
    </ligand>
</feature>
<feature type="binding site" description="in other chain" evidence="2">
    <location>
        <begin position="94"/>
        <end position="100"/>
    </location>
    <ligand>
        <name>substrate</name>
        <note>ligand shared between two neighboring subunits</note>
    </ligand>
</feature>
<feature type="binding site" description="in other chain" evidence="2">
    <location>
        <position position="109"/>
    </location>
    <ligand>
        <name>substrate</name>
        <note>ligand shared between two neighboring subunits</note>
    </ligand>
</feature>
<feature type="binding site" description="in other chain" evidence="2">
    <location>
        <position position="132"/>
    </location>
    <ligand>
        <name>substrate</name>
        <note>ligand shared between two neighboring subunits</note>
    </ligand>
</feature>
<feature type="binding site" evidence="3">
    <location>
        <position position="212"/>
    </location>
    <ligand>
        <name>substrate</name>
        <note>ligand shared between two neighboring subunits</note>
    </ligand>
</feature>
<feature type="binding site" evidence="2">
    <location>
        <position position="252"/>
    </location>
    <ligand>
        <name>Mn(2+)</name>
        <dbReference type="ChEBI" id="CHEBI:29035"/>
        <note>ligand shared between two neighboring subunits</note>
    </ligand>
</feature>
<feature type="binding site" evidence="2">
    <location>
        <position position="260"/>
    </location>
    <ligand>
        <name>NADP(+)</name>
        <dbReference type="ChEBI" id="CHEBI:58349"/>
    </ligand>
</feature>
<feature type="binding site" description="in other chain" evidence="2">
    <location>
        <position position="275"/>
    </location>
    <ligand>
        <name>Mn(2+)</name>
        <dbReference type="ChEBI" id="CHEBI:29035"/>
        <note>ligand shared between two neighboring subunits</note>
    </ligand>
</feature>
<feature type="binding site" description="in other chain" evidence="2">
    <location>
        <position position="279"/>
    </location>
    <ligand>
        <name>Mn(2+)</name>
        <dbReference type="ChEBI" id="CHEBI:29035"/>
        <note>ligand shared between two neighboring subunits</note>
    </ligand>
</feature>
<feature type="binding site" evidence="2">
    <location>
        <begin position="310"/>
        <end position="315"/>
    </location>
    <ligand>
        <name>NADP(+)</name>
        <dbReference type="ChEBI" id="CHEBI:58349"/>
    </ligand>
</feature>
<feature type="binding site" evidence="2">
    <location>
        <position position="328"/>
    </location>
    <ligand>
        <name>NADP(+)</name>
        <dbReference type="ChEBI" id="CHEBI:58349"/>
    </ligand>
</feature>
<feature type="site" description="Critical for catalysis" evidence="1">
    <location>
        <position position="139"/>
    </location>
</feature>
<feature type="site" description="Critical for catalysis" evidence="1">
    <location>
        <position position="212"/>
    </location>
</feature>
<feature type="modified residue" description="N-acetylserine" evidence="2">
    <location>
        <position position="2"/>
    </location>
</feature>
<feature type="modified residue" description="Phosphotyrosine" evidence="2">
    <location>
        <position position="42"/>
    </location>
</feature>
<feature type="modified residue" description="N6-acetyllysine" evidence="3">
    <location>
        <position position="81"/>
    </location>
</feature>
<feature type="modified residue" description="N6-succinyllysine" evidence="3">
    <location>
        <position position="126"/>
    </location>
</feature>
<feature type="modified residue" description="N6-acetyllysine" evidence="3">
    <location>
        <position position="224"/>
    </location>
</feature>
<feature type="modified residue" description="N6-acetyllysine" evidence="3">
    <location>
        <position position="233"/>
    </location>
</feature>
<feature type="modified residue" description="N6-acetyllysine" evidence="3">
    <location>
        <position position="243"/>
    </location>
</feature>
<feature type="modified residue" description="N6-acetyllysine" evidence="2">
    <location>
        <position position="321"/>
    </location>
</feature>
<feature type="modified residue" description="Phosphoserine" evidence="3">
    <location>
        <position position="389"/>
    </location>
</feature>
<feature type="modified residue" description="N6-succinyllysine" evidence="3">
    <location>
        <position position="400"/>
    </location>
</feature>
<name>IDHC_MICME</name>
<dbReference type="EC" id="1.1.1.42" evidence="3"/>
<dbReference type="EMBL" id="AF048831">
    <property type="protein sequence ID" value="AAD02924.1"/>
    <property type="molecule type" value="mRNA"/>
</dbReference>
<dbReference type="SMR" id="Q9Z2K9"/>
<dbReference type="GO" id="GO:0005829">
    <property type="term" value="C:cytosol"/>
    <property type="evidence" value="ECO:0007669"/>
    <property type="project" value="UniProtKB-SubCell"/>
</dbReference>
<dbReference type="GO" id="GO:0005739">
    <property type="term" value="C:mitochondrion"/>
    <property type="evidence" value="ECO:0007669"/>
    <property type="project" value="TreeGrafter"/>
</dbReference>
<dbReference type="GO" id="GO:0005777">
    <property type="term" value="C:peroxisome"/>
    <property type="evidence" value="ECO:0007669"/>
    <property type="project" value="TreeGrafter"/>
</dbReference>
<dbReference type="GO" id="GO:0004450">
    <property type="term" value="F:isocitrate dehydrogenase (NADP+) activity"/>
    <property type="evidence" value="ECO:0000250"/>
    <property type="project" value="UniProtKB"/>
</dbReference>
<dbReference type="GO" id="GO:0000287">
    <property type="term" value="F:magnesium ion binding"/>
    <property type="evidence" value="ECO:0000250"/>
    <property type="project" value="UniProtKB"/>
</dbReference>
<dbReference type="GO" id="GO:0051287">
    <property type="term" value="F:NAD binding"/>
    <property type="evidence" value="ECO:0007669"/>
    <property type="project" value="InterPro"/>
</dbReference>
<dbReference type="GO" id="GO:0006103">
    <property type="term" value="P:2-oxoglutarate metabolic process"/>
    <property type="evidence" value="ECO:0000250"/>
    <property type="project" value="UniProtKB"/>
</dbReference>
<dbReference type="GO" id="GO:0006097">
    <property type="term" value="P:glyoxylate cycle"/>
    <property type="evidence" value="ECO:0007669"/>
    <property type="project" value="UniProtKB-KW"/>
</dbReference>
<dbReference type="GO" id="GO:0006102">
    <property type="term" value="P:isocitrate metabolic process"/>
    <property type="evidence" value="ECO:0000250"/>
    <property type="project" value="UniProtKB"/>
</dbReference>
<dbReference type="GO" id="GO:0006739">
    <property type="term" value="P:NADP metabolic process"/>
    <property type="evidence" value="ECO:0007669"/>
    <property type="project" value="TreeGrafter"/>
</dbReference>
<dbReference type="GO" id="GO:0006099">
    <property type="term" value="P:tricarboxylic acid cycle"/>
    <property type="evidence" value="ECO:0007669"/>
    <property type="project" value="UniProtKB-KW"/>
</dbReference>
<dbReference type="FunFam" id="3.40.718.10:FF:000002">
    <property type="entry name" value="Isocitrate dehydrogenase [NADP]"/>
    <property type="match status" value="1"/>
</dbReference>
<dbReference type="Gene3D" id="3.40.718.10">
    <property type="entry name" value="Isopropylmalate Dehydrogenase"/>
    <property type="match status" value="1"/>
</dbReference>
<dbReference type="InterPro" id="IPR019818">
    <property type="entry name" value="IsoCit/isopropylmalate_DH_CS"/>
</dbReference>
<dbReference type="InterPro" id="IPR004790">
    <property type="entry name" value="Isocitrate_DH_NADP"/>
</dbReference>
<dbReference type="InterPro" id="IPR024084">
    <property type="entry name" value="IsoPropMal-DH-like_dom"/>
</dbReference>
<dbReference type="NCBIfam" id="TIGR00127">
    <property type="entry name" value="nadp_idh_euk"/>
    <property type="match status" value="1"/>
</dbReference>
<dbReference type="NCBIfam" id="NF006156">
    <property type="entry name" value="PRK08299.1"/>
    <property type="match status" value="1"/>
</dbReference>
<dbReference type="PANTHER" id="PTHR11822:SF21">
    <property type="entry name" value="ISOCITRATE DEHYDROGENASE [NADP], MITOCHONDRIAL"/>
    <property type="match status" value="1"/>
</dbReference>
<dbReference type="PANTHER" id="PTHR11822">
    <property type="entry name" value="NADP-SPECIFIC ISOCITRATE DEHYDROGENASE"/>
    <property type="match status" value="1"/>
</dbReference>
<dbReference type="Pfam" id="PF00180">
    <property type="entry name" value="Iso_dh"/>
    <property type="match status" value="1"/>
</dbReference>
<dbReference type="PIRSF" id="PIRSF000108">
    <property type="entry name" value="IDH_NADP"/>
    <property type="match status" value="1"/>
</dbReference>
<dbReference type="SMART" id="SM01329">
    <property type="entry name" value="Iso_dh"/>
    <property type="match status" value="1"/>
</dbReference>
<dbReference type="SUPFAM" id="SSF53659">
    <property type="entry name" value="Isocitrate/Isopropylmalate dehydrogenase-like"/>
    <property type="match status" value="1"/>
</dbReference>
<dbReference type="PROSITE" id="PS00470">
    <property type="entry name" value="IDH_IMDH"/>
    <property type="match status" value="1"/>
</dbReference>
<reference key="1">
    <citation type="journal article" date="1998" name="Mol. Biol. Evol.">
        <title>Cytosolic isocitrate dehydrogenase in humans, mice, and voles and phylogenetic analysis of the enzyme family.</title>
        <authorList>
            <person name="Nekrutenko A."/>
            <person name="Hillis D.M."/>
            <person name="Patton J.C."/>
            <person name="Bradley R.D."/>
            <person name="Baker R.J."/>
        </authorList>
    </citation>
    <scope>NUCLEOTIDE SEQUENCE [MRNA]</scope>
    <source>
        <tissue>Liver</tissue>
    </source>
</reference>
<proteinExistence type="evidence at transcript level"/>
<comment type="function">
    <text evidence="2 5">Catalyzes the NADP(+)-dependent oxidative decarboxylation of isocitrate (D-threo-isocitrate) to 2-ketoglutarate (2-oxoglutarate), which is required by other enzymes such as the phytanoyl-CoA dioxygenase. Plays a critical role in the generation of NADPH, an important cofactor in many biosynthesis pathways (By similarity). May act as a corneal epithelial crystallin and may be involved in maintaining corneal epithelial transparency (By similarity).</text>
</comment>
<comment type="catalytic activity">
    <reaction evidence="3">
        <text>D-threo-isocitrate + NADP(+) = 2-oxoglutarate + CO2 + NADPH</text>
        <dbReference type="Rhea" id="RHEA:19629"/>
        <dbReference type="ChEBI" id="CHEBI:15562"/>
        <dbReference type="ChEBI" id="CHEBI:16526"/>
        <dbReference type="ChEBI" id="CHEBI:16810"/>
        <dbReference type="ChEBI" id="CHEBI:57783"/>
        <dbReference type="ChEBI" id="CHEBI:58349"/>
        <dbReference type="EC" id="1.1.1.42"/>
    </reaction>
    <physiologicalReaction direction="left-to-right" evidence="3">
        <dbReference type="Rhea" id="RHEA:19630"/>
    </physiologicalReaction>
</comment>
<comment type="cofactor">
    <cofactor evidence="3">
        <name>Mg(2+)</name>
        <dbReference type="ChEBI" id="CHEBI:18420"/>
    </cofactor>
    <cofactor evidence="3">
        <name>Mn(2+)</name>
        <dbReference type="ChEBI" id="CHEBI:29035"/>
    </cofactor>
    <text evidence="3">Binds 1 Mg(2+) or Mn(2+) ion per subunit.</text>
</comment>
<comment type="subunit">
    <text evidence="3">Homodimer.</text>
</comment>
<comment type="subcellular location">
    <subcellularLocation>
        <location evidence="4">Cytoplasm</location>
        <location evidence="4">Cytosol</location>
    </subcellularLocation>
</comment>
<comment type="PTM">
    <text evidence="1">Acetylation at Lys-374 dramatically reduces catalytic activity.</text>
</comment>
<comment type="similarity">
    <text evidence="6">Belongs to the isocitrate and isopropylmalate dehydrogenases family.</text>
</comment>
<sequence length="414" mass="46678">MSKKIHGGSVVEMQGDEMTRIIWELIKEKLILPYVELDLHSYDLGIENRDATNDQVTKDAAEAIKKYNVGVKCATITPDEKRVEEFKLKQMWKSPNGTIRNILGGTVFREAIICKNIPRLVTGWVKPIIIGRHAYGDQYRATDFVVPGPGKVEITFTPKDGSQKVTYLVHSFEEGGGVAMGMYNQDKSIEDFAHSSFQMALSKGWPLYLSTKNTILKKYDGRFKDIFQEIYDKQYKSQFEAQKIWYEHRLIDDMVAQAMKSEGGFIWACKNYDGDVQSDSVAQGYGSLGMMTSVLICPDGKTVEAEAAHGTVTRHYRMHQKGQETSTNPIASIFAWSRGLAHRARLDNNTELSFFAKALEEVCIETIEAGFMTKDLAACIKGLPNVQRSDYLNTFEFMDKLGENLKAKLAQAKL</sequence>